<keyword id="KW-0539">Nucleus</keyword>
<keyword id="KW-1185">Reference proteome</keyword>
<keyword id="KW-0690">Ribosome biogenesis</keyword>
<keyword id="KW-0694">RNA-binding</keyword>
<keyword id="KW-0698">rRNA processing</keyword>
<sequence length="365" mass="40963">MTTRKRNEFLDIVSDDDEGSDRGYDSAAAEESKGRLAKRRKTHTRADDLSDEESDFGRSESEDESKTRLKGKPKSKSQTTERSNDSDDEDEADDGEKMQVDQYLDTTAAHSPSQSRSQSPSASSVSSKPTKLKKKPLDKVRPPKKNKTGVIYLSSLPPYLKPFALKSMLETRGFGPITKVFLTPEVPSNSAPRRRSNKRKSYADGWVEFASKKTAKICAETLNATIVGGKKGGWYHDDVWNMKYLKGFKWADLMEQVQRERSEREAKRRIEDTRARKEDKVFLQGVEQGKVLQGIQKKNEEKKKKKGETGPGEGEGSADAAAAAAASELKVRRLFKQSEVKMGRDKVKDISTLEDDAKRVLSKIF</sequence>
<evidence type="ECO:0000250" key="1"/>
<evidence type="ECO:0000256" key="2">
    <source>
        <dbReference type="SAM" id="MobiDB-lite"/>
    </source>
</evidence>
<evidence type="ECO:0000305" key="3"/>
<organism>
    <name type="scientific">Neosartorya fischeri (strain ATCC 1020 / DSM 3700 / CBS 544.65 / FGSC A1164 / JCM 1740 / NRRL 181 / WB 181)</name>
    <name type="common">Aspergillus fischerianus</name>
    <dbReference type="NCBI Taxonomy" id="331117"/>
    <lineage>
        <taxon>Eukaryota</taxon>
        <taxon>Fungi</taxon>
        <taxon>Dikarya</taxon>
        <taxon>Ascomycota</taxon>
        <taxon>Pezizomycotina</taxon>
        <taxon>Eurotiomycetes</taxon>
        <taxon>Eurotiomycetidae</taxon>
        <taxon>Eurotiales</taxon>
        <taxon>Aspergillaceae</taxon>
        <taxon>Aspergillus</taxon>
        <taxon>Aspergillus subgen. Fumigati</taxon>
    </lineage>
</organism>
<proteinExistence type="inferred from homology"/>
<protein>
    <recommendedName>
        <fullName>Pre-rRNA-processing protein esf2</fullName>
    </recommendedName>
    <alternativeName>
        <fullName>18S rRNA factor 2</fullName>
    </alternativeName>
</protein>
<accession>A1DIN9</accession>
<reference key="1">
    <citation type="journal article" date="2008" name="PLoS Genet.">
        <title>Genomic islands in the pathogenic filamentous fungus Aspergillus fumigatus.</title>
        <authorList>
            <person name="Fedorova N.D."/>
            <person name="Khaldi N."/>
            <person name="Joardar V.S."/>
            <person name="Maiti R."/>
            <person name="Amedeo P."/>
            <person name="Anderson M.J."/>
            <person name="Crabtree J."/>
            <person name="Silva J.C."/>
            <person name="Badger J.H."/>
            <person name="Albarraq A."/>
            <person name="Angiuoli S."/>
            <person name="Bussey H."/>
            <person name="Bowyer P."/>
            <person name="Cotty P.J."/>
            <person name="Dyer P.S."/>
            <person name="Egan A."/>
            <person name="Galens K."/>
            <person name="Fraser-Liggett C.M."/>
            <person name="Haas B.J."/>
            <person name="Inman J.M."/>
            <person name="Kent R."/>
            <person name="Lemieux S."/>
            <person name="Malavazi I."/>
            <person name="Orvis J."/>
            <person name="Roemer T."/>
            <person name="Ronning C.M."/>
            <person name="Sundaram J.P."/>
            <person name="Sutton G."/>
            <person name="Turner G."/>
            <person name="Venter J.C."/>
            <person name="White O.R."/>
            <person name="Whitty B.R."/>
            <person name="Youngman P."/>
            <person name="Wolfe K.H."/>
            <person name="Goldman G.H."/>
            <person name="Wortman J.R."/>
            <person name="Jiang B."/>
            <person name="Denning D.W."/>
            <person name="Nierman W.C."/>
        </authorList>
    </citation>
    <scope>NUCLEOTIDE SEQUENCE [LARGE SCALE GENOMIC DNA]</scope>
    <source>
        <strain>ATCC 1020 / DSM 3700 / CBS 544.65 / FGSC A1164 / JCM 1740 / NRRL 181 / WB 181</strain>
    </source>
</reference>
<gene>
    <name type="primary">esf2</name>
    <name type="ORF">NFIA_092060</name>
</gene>
<dbReference type="EMBL" id="DS027696">
    <property type="protein sequence ID" value="EAW19246.1"/>
    <property type="molecule type" value="Genomic_DNA"/>
</dbReference>
<dbReference type="RefSeq" id="XP_001261143.1">
    <property type="nucleotide sequence ID" value="XM_001261142.1"/>
</dbReference>
<dbReference type="STRING" id="331117.A1DIN9"/>
<dbReference type="EnsemblFungi" id="EAW19246">
    <property type="protein sequence ID" value="EAW19246"/>
    <property type="gene ID" value="NFIA_092060"/>
</dbReference>
<dbReference type="GeneID" id="4587701"/>
<dbReference type="KEGG" id="nfi:NFIA_092060"/>
<dbReference type="VEuPathDB" id="FungiDB:NFIA_092060"/>
<dbReference type="eggNOG" id="KOG3152">
    <property type="taxonomic scope" value="Eukaryota"/>
</dbReference>
<dbReference type="HOGENOM" id="CLU_054086_0_1_1"/>
<dbReference type="OMA" id="TRKHNDF"/>
<dbReference type="OrthoDB" id="287393at2759"/>
<dbReference type="Proteomes" id="UP000006702">
    <property type="component" value="Unassembled WGS sequence"/>
</dbReference>
<dbReference type="GO" id="GO:0005730">
    <property type="term" value="C:nucleolus"/>
    <property type="evidence" value="ECO:0007669"/>
    <property type="project" value="UniProtKB-SubCell"/>
</dbReference>
<dbReference type="GO" id="GO:0003723">
    <property type="term" value="F:RNA binding"/>
    <property type="evidence" value="ECO:0007669"/>
    <property type="project" value="UniProtKB-KW"/>
</dbReference>
<dbReference type="GO" id="GO:0000480">
    <property type="term" value="P:endonucleolytic cleavage in 5'-ETS of tricistronic rRNA transcript (SSU-rRNA, 5.8S rRNA, LSU-rRNA)"/>
    <property type="evidence" value="ECO:0007669"/>
    <property type="project" value="TreeGrafter"/>
</dbReference>
<dbReference type="GO" id="GO:0000447">
    <property type="term" value="P:endonucleolytic cleavage in ITS1 to separate SSU-rRNA from 5.8S rRNA and LSU-rRNA from tricistronic rRNA transcript (SSU-rRNA, 5.8S rRNA, LSU-rRNA)"/>
    <property type="evidence" value="ECO:0007669"/>
    <property type="project" value="TreeGrafter"/>
</dbReference>
<dbReference type="GO" id="GO:0000472">
    <property type="term" value="P:endonucleolytic cleavage to generate mature 5'-end of SSU-rRNA from (SSU-rRNA, 5.8S rRNA, LSU-rRNA)"/>
    <property type="evidence" value="ECO:0007669"/>
    <property type="project" value="TreeGrafter"/>
</dbReference>
<dbReference type="GO" id="GO:0034462">
    <property type="term" value="P:small-subunit processome assembly"/>
    <property type="evidence" value="ECO:0007669"/>
    <property type="project" value="TreeGrafter"/>
</dbReference>
<dbReference type="CDD" id="cd12263">
    <property type="entry name" value="RRM_ABT1_like"/>
    <property type="match status" value="1"/>
</dbReference>
<dbReference type="FunFam" id="3.30.70.330:FF:001600">
    <property type="entry name" value="Pre-rRNA-processing protein esf2"/>
    <property type="match status" value="1"/>
</dbReference>
<dbReference type="Gene3D" id="3.30.70.330">
    <property type="match status" value="1"/>
</dbReference>
<dbReference type="InterPro" id="IPR039119">
    <property type="entry name" value="ABT1/Esf2"/>
</dbReference>
<dbReference type="InterPro" id="IPR034353">
    <property type="entry name" value="ABT1/ESF2_RRM"/>
</dbReference>
<dbReference type="InterPro" id="IPR012677">
    <property type="entry name" value="Nucleotide-bd_a/b_plait_sf"/>
</dbReference>
<dbReference type="InterPro" id="IPR035979">
    <property type="entry name" value="RBD_domain_sf"/>
</dbReference>
<dbReference type="PANTHER" id="PTHR12311">
    <property type="entry name" value="ACTIVATOR OF BASAL TRANSCRIPTION 1"/>
    <property type="match status" value="1"/>
</dbReference>
<dbReference type="PANTHER" id="PTHR12311:SF7">
    <property type="entry name" value="ACTIVATOR OF BASAL TRANSCRIPTION 1"/>
    <property type="match status" value="1"/>
</dbReference>
<dbReference type="SUPFAM" id="SSF54928">
    <property type="entry name" value="RNA-binding domain, RBD"/>
    <property type="match status" value="1"/>
</dbReference>
<feature type="chain" id="PRO_0000285375" description="Pre-rRNA-processing protein esf2">
    <location>
        <begin position="1"/>
        <end position="365"/>
    </location>
</feature>
<feature type="domain" description="RRM">
    <location>
        <begin position="149"/>
        <end position="239"/>
    </location>
</feature>
<feature type="region of interest" description="Disordered" evidence="2">
    <location>
        <begin position="1"/>
        <end position="146"/>
    </location>
</feature>
<feature type="region of interest" description="Disordered" evidence="2">
    <location>
        <begin position="293"/>
        <end position="322"/>
    </location>
</feature>
<feature type="compositionally biased region" description="Basic and acidic residues" evidence="2">
    <location>
        <begin position="20"/>
        <end position="34"/>
    </location>
</feature>
<feature type="compositionally biased region" description="Basic and acidic residues" evidence="2">
    <location>
        <begin position="55"/>
        <end position="67"/>
    </location>
</feature>
<feature type="compositionally biased region" description="Low complexity" evidence="2">
    <location>
        <begin position="111"/>
        <end position="129"/>
    </location>
</feature>
<name>ESF2_NEOFI</name>
<comment type="function">
    <text evidence="1">Involved in the small subunit (SSU) processome assembly and function, and in the 18S rRNA synthesis. Required for the early cleavages at sites A0, A1 and A2 (By similarity).</text>
</comment>
<comment type="subcellular location">
    <subcellularLocation>
        <location evidence="1">Nucleus</location>
        <location evidence="1">Nucleolus</location>
    </subcellularLocation>
</comment>
<comment type="similarity">
    <text evidence="3">Belongs to the ESF2/ABP1 family.</text>
</comment>